<comment type="function">
    <text evidence="1">An aminoacyl-tRNA editing enzyme that deacylates mischarged D-aminoacyl-tRNAs. Also deacylates mischarged glycyl-tRNA(Ala), protecting cells against glycine mischarging by AlaRS. Acts via tRNA-based rather than protein-based catalysis; rejects L-amino acids rather than detecting D-amino acids in the active site. By recycling D-aminoacyl-tRNA to D-amino acids and free tRNA molecules, this enzyme counteracts the toxicity associated with the formation of D-aminoacyl-tRNA entities in vivo and helps enforce protein L-homochirality.</text>
</comment>
<comment type="catalytic activity">
    <reaction evidence="1">
        <text>glycyl-tRNA(Ala) + H2O = tRNA(Ala) + glycine + H(+)</text>
        <dbReference type="Rhea" id="RHEA:53744"/>
        <dbReference type="Rhea" id="RHEA-COMP:9657"/>
        <dbReference type="Rhea" id="RHEA-COMP:13640"/>
        <dbReference type="ChEBI" id="CHEBI:15377"/>
        <dbReference type="ChEBI" id="CHEBI:15378"/>
        <dbReference type="ChEBI" id="CHEBI:57305"/>
        <dbReference type="ChEBI" id="CHEBI:78442"/>
        <dbReference type="ChEBI" id="CHEBI:78522"/>
        <dbReference type="EC" id="3.1.1.96"/>
    </reaction>
</comment>
<comment type="catalytic activity">
    <reaction evidence="1">
        <text>a D-aminoacyl-tRNA + H2O = a tRNA + a D-alpha-amino acid + H(+)</text>
        <dbReference type="Rhea" id="RHEA:13953"/>
        <dbReference type="Rhea" id="RHEA-COMP:10123"/>
        <dbReference type="Rhea" id="RHEA-COMP:10124"/>
        <dbReference type="ChEBI" id="CHEBI:15377"/>
        <dbReference type="ChEBI" id="CHEBI:15378"/>
        <dbReference type="ChEBI" id="CHEBI:59871"/>
        <dbReference type="ChEBI" id="CHEBI:78442"/>
        <dbReference type="ChEBI" id="CHEBI:79333"/>
        <dbReference type="EC" id="3.1.1.96"/>
    </reaction>
</comment>
<comment type="subunit">
    <text evidence="1">Homodimer.</text>
</comment>
<comment type="subcellular location">
    <subcellularLocation>
        <location evidence="1">Cytoplasm</location>
    </subcellularLocation>
</comment>
<comment type="domain">
    <text evidence="1">A Gly-cisPro motif from one monomer fits into the active site of the other monomer to allow specific chiral rejection of L-amino acids.</text>
</comment>
<comment type="similarity">
    <text evidence="1">Belongs to the DTD family.</text>
</comment>
<keyword id="KW-0963">Cytoplasm</keyword>
<keyword id="KW-0378">Hydrolase</keyword>
<keyword id="KW-1185">Reference proteome</keyword>
<keyword id="KW-0694">RNA-binding</keyword>
<keyword id="KW-0820">tRNA-binding</keyword>
<gene>
    <name evidence="1" type="primary">dtd</name>
    <name type="ordered locus">SPD_1457</name>
</gene>
<reference key="1">
    <citation type="journal article" date="2007" name="J. Bacteriol.">
        <title>Genome sequence of Avery's virulent serotype 2 strain D39 of Streptococcus pneumoniae and comparison with that of unencapsulated laboratory strain R6.</title>
        <authorList>
            <person name="Lanie J.A."/>
            <person name="Ng W.-L."/>
            <person name="Kazmierczak K.M."/>
            <person name="Andrzejewski T.M."/>
            <person name="Davidsen T.M."/>
            <person name="Wayne K.J."/>
            <person name="Tettelin H."/>
            <person name="Glass J.I."/>
            <person name="Winkler M.E."/>
        </authorList>
    </citation>
    <scope>NUCLEOTIDE SEQUENCE [LARGE SCALE GENOMIC DNA]</scope>
    <source>
        <strain>D39 / NCTC 7466</strain>
    </source>
</reference>
<accession>Q04JC5</accession>
<proteinExistence type="inferred from homology"/>
<protein>
    <recommendedName>
        <fullName evidence="1">D-aminoacyl-tRNA deacylase</fullName>
        <shortName evidence="1">DTD</shortName>
        <ecNumber evidence="1">3.1.1.96</ecNumber>
    </recommendedName>
    <alternativeName>
        <fullName evidence="1">Gly-tRNA(Ala) deacylase</fullName>
    </alternativeName>
</protein>
<organism>
    <name type="scientific">Streptococcus pneumoniae serotype 2 (strain D39 / NCTC 7466)</name>
    <dbReference type="NCBI Taxonomy" id="373153"/>
    <lineage>
        <taxon>Bacteria</taxon>
        <taxon>Bacillati</taxon>
        <taxon>Bacillota</taxon>
        <taxon>Bacilli</taxon>
        <taxon>Lactobacillales</taxon>
        <taxon>Streptococcaceae</taxon>
        <taxon>Streptococcus</taxon>
    </lineage>
</organism>
<dbReference type="EC" id="3.1.1.96" evidence="1"/>
<dbReference type="EMBL" id="CP000410">
    <property type="protein sequence ID" value="ABJ53929.1"/>
    <property type="molecule type" value="Genomic_DNA"/>
</dbReference>
<dbReference type="RefSeq" id="WP_000691400.1">
    <property type="nucleotide sequence ID" value="NZ_JAMLJR010000013.1"/>
</dbReference>
<dbReference type="SMR" id="Q04JC5"/>
<dbReference type="PaxDb" id="373153-SPD_1457"/>
<dbReference type="GeneID" id="45653142"/>
<dbReference type="KEGG" id="spd:SPD_1457"/>
<dbReference type="eggNOG" id="COG1490">
    <property type="taxonomic scope" value="Bacteria"/>
</dbReference>
<dbReference type="HOGENOM" id="CLU_076901_1_0_9"/>
<dbReference type="BioCyc" id="SPNE373153:G1G6V-1572-MONOMER"/>
<dbReference type="Proteomes" id="UP000001452">
    <property type="component" value="Chromosome"/>
</dbReference>
<dbReference type="GO" id="GO:0005737">
    <property type="term" value="C:cytoplasm"/>
    <property type="evidence" value="ECO:0007669"/>
    <property type="project" value="UniProtKB-SubCell"/>
</dbReference>
<dbReference type="GO" id="GO:0051500">
    <property type="term" value="F:D-tyrosyl-tRNA(Tyr) deacylase activity"/>
    <property type="evidence" value="ECO:0007669"/>
    <property type="project" value="TreeGrafter"/>
</dbReference>
<dbReference type="GO" id="GO:0106026">
    <property type="term" value="F:Gly-tRNA(Ala) deacylase activity"/>
    <property type="evidence" value="ECO:0007669"/>
    <property type="project" value="UniProtKB-UniRule"/>
</dbReference>
<dbReference type="GO" id="GO:0043908">
    <property type="term" value="F:Ser(Gly)-tRNA(Ala) hydrolase activity"/>
    <property type="evidence" value="ECO:0007669"/>
    <property type="project" value="UniProtKB-UniRule"/>
</dbReference>
<dbReference type="GO" id="GO:0000049">
    <property type="term" value="F:tRNA binding"/>
    <property type="evidence" value="ECO:0007669"/>
    <property type="project" value="UniProtKB-UniRule"/>
</dbReference>
<dbReference type="GO" id="GO:0019478">
    <property type="term" value="P:D-amino acid catabolic process"/>
    <property type="evidence" value="ECO:0007669"/>
    <property type="project" value="UniProtKB-UniRule"/>
</dbReference>
<dbReference type="CDD" id="cd00563">
    <property type="entry name" value="Dtyr_deacylase"/>
    <property type="match status" value="1"/>
</dbReference>
<dbReference type="FunFam" id="3.50.80.10:FF:000001">
    <property type="entry name" value="D-aminoacyl-tRNA deacylase"/>
    <property type="match status" value="1"/>
</dbReference>
<dbReference type="Gene3D" id="3.50.80.10">
    <property type="entry name" value="D-tyrosyl-tRNA(Tyr) deacylase"/>
    <property type="match status" value="1"/>
</dbReference>
<dbReference type="HAMAP" id="MF_00518">
    <property type="entry name" value="Deacylase_Dtd"/>
    <property type="match status" value="1"/>
</dbReference>
<dbReference type="InterPro" id="IPR003732">
    <property type="entry name" value="Daa-tRNA_deacyls_DTD"/>
</dbReference>
<dbReference type="InterPro" id="IPR023509">
    <property type="entry name" value="DTD-like_sf"/>
</dbReference>
<dbReference type="NCBIfam" id="TIGR00256">
    <property type="entry name" value="D-aminoacyl-tRNA deacylase"/>
    <property type="match status" value="1"/>
</dbReference>
<dbReference type="PANTHER" id="PTHR10472:SF5">
    <property type="entry name" value="D-AMINOACYL-TRNA DEACYLASE 1"/>
    <property type="match status" value="1"/>
</dbReference>
<dbReference type="PANTHER" id="PTHR10472">
    <property type="entry name" value="D-TYROSYL-TRNA TYR DEACYLASE"/>
    <property type="match status" value="1"/>
</dbReference>
<dbReference type="Pfam" id="PF02580">
    <property type="entry name" value="Tyr_Deacylase"/>
    <property type="match status" value="1"/>
</dbReference>
<dbReference type="SUPFAM" id="SSF69500">
    <property type="entry name" value="DTD-like"/>
    <property type="match status" value="1"/>
</dbReference>
<evidence type="ECO:0000255" key="1">
    <source>
        <dbReference type="HAMAP-Rule" id="MF_00518"/>
    </source>
</evidence>
<sequence length="147" mass="16214">MKIIIQRVKKAQVSIEGQIQGKINQGLLLLVGVGPEDQEEDLDYAVRKLVNMRIFSDAEGKMNLSVKDIEGEILSISQFTLFADTKKGNRPAFTGAAKPDMASDFYDAFNQKLAQEVPVQTGIFGADMQVELVNNGPVTIILDTKKR</sequence>
<name>DTD_STRP2</name>
<feature type="chain" id="PRO_1000050893" description="D-aminoacyl-tRNA deacylase">
    <location>
        <begin position="1"/>
        <end position="147"/>
    </location>
</feature>
<feature type="short sequence motif" description="Gly-cisPro motif, important for rejection of L-amino acids" evidence="1">
    <location>
        <begin position="136"/>
        <end position="137"/>
    </location>
</feature>